<feature type="chain" id="PRO_1000009060" description="Phosphoheptose isomerase">
    <location>
        <begin position="1"/>
        <end position="191"/>
    </location>
</feature>
<feature type="domain" description="SIS" evidence="1">
    <location>
        <begin position="37"/>
        <end position="191"/>
    </location>
</feature>
<feature type="binding site" evidence="1">
    <location>
        <begin position="52"/>
        <end position="54"/>
    </location>
    <ligand>
        <name>substrate</name>
    </ligand>
</feature>
<feature type="binding site" evidence="1">
    <location>
        <position position="61"/>
    </location>
    <ligand>
        <name>Zn(2+)</name>
        <dbReference type="ChEBI" id="CHEBI:29105"/>
    </ligand>
</feature>
<feature type="binding site" evidence="1">
    <location>
        <position position="65"/>
    </location>
    <ligand>
        <name>substrate</name>
    </ligand>
</feature>
<feature type="binding site" evidence="1">
    <location>
        <position position="65"/>
    </location>
    <ligand>
        <name>Zn(2+)</name>
        <dbReference type="ChEBI" id="CHEBI:29105"/>
    </ligand>
</feature>
<feature type="binding site" evidence="1">
    <location>
        <begin position="93"/>
        <end position="94"/>
    </location>
    <ligand>
        <name>substrate</name>
    </ligand>
</feature>
<feature type="binding site" evidence="1">
    <location>
        <begin position="119"/>
        <end position="121"/>
    </location>
    <ligand>
        <name>substrate</name>
    </ligand>
</feature>
<feature type="binding site" evidence="1">
    <location>
        <position position="124"/>
    </location>
    <ligand>
        <name>substrate</name>
    </ligand>
</feature>
<feature type="binding site" evidence="1">
    <location>
        <position position="172"/>
    </location>
    <ligand>
        <name>substrate</name>
    </ligand>
</feature>
<feature type="binding site" evidence="1">
    <location>
        <position position="172"/>
    </location>
    <ligand>
        <name>Zn(2+)</name>
        <dbReference type="ChEBI" id="CHEBI:29105"/>
    </ligand>
</feature>
<feature type="binding site" evidence="1">
    <location>
        <position position="180"/>
    </location>
    <ligand>
        <name>Zn(2+)</name>
        <dbReference type="ChEBI" id="CHEBI:29105"/>
    </ligand>
</feature>
<accession>Q11Y71</accession>
<evidence type="ECO:0000255" key="1">
    <source>
        <dbReference type="HAMAP-Rule" id="MF_00067"/>
    </source>
</evidence>
<proteinExistence type="inferred from homology"/>
<name>GMHA_CYTH3</name>
<protein>
    <recommendedName>
        <fullName evidence="1">Phosphoheptose isomerase</fullName>
        <ecNumber evidence="1">5.3.1.28</ecNumber>
    </recommendedName>
    <alternativeName>
        <fullName evidence="1">Sedoheptulose 7-phosphate isomerase</fullName>
    </alternativeName>
</protein>
<sequence>MIESTIISQLEEASAVLSNFIEQEKKQNSIAKAADVITSSLKQGGKIISCGNGGSSCDAMHFAEELTGRYRENRKAIPAISISDPSHMSCVANDYGYKFVFSRYLEALGNKGDVLLAISTSGNSENVLEAVKEAKNKGMFVVALTGKDGGKLLPLADVCINVPHVGYADRIQEVHIKIIHTLILLIEQSLL</sequence>
<keyword id="KW-0119">Carbohydrate metabolism</keyword>
<keyword id="KW-0963">Cytoplasm</keyword>
<keyword id="KW-0413">Isomerase</keyword>
<keyword id="KW-0479">Metal-binding</keyword>
<keyword id="KW-1185">Reference proteome</keyword>
<keyword id="KW-0862">Zinc</keyword>
<dbReference type="EC" id="5.3.1.28" evidence="1"/>
<dbReference type="EMBL" id="CP000383">
    <property type="protein sequence ID" value="ABG57645.1"/>
    <property type="molecule type" value="Genomic_DNA"/>
</dbReference>
<dbReference type="RefSeq" id="WP_011583761.1">
    <property type="nucleotide sequence ID" value="NC_008255.1"/>
</dbReference>
<dbReference type="SMR" id="Q11Y71"/>
<dbReference type="STRING" id="269798.CHU_0355"/>
<dbReference type="KEGG" id="chu:CHU_0355"/>
<dbReference type="eggNOG" id="COG0279">
    <property type="taxonomic scope" value="Bacteria"/>
</dbReference>
<dbReference type="HOGENOM" id="CLU_080999_4_0_10"/>
<dbReference type="OrthoDB" id="9781311at2"/>
<dbReference type="UniPathway" id="UPA00041">
    <property type="reaction ID" value="UER00436"/>
</dbReference>
<dbReference type="Proteomes" id="UP000001822">
    <property type="component" value="Chromosome"/>
</dbReference>
<dbReference type="GO" id="GO:0005737">
    <property type="term" value="C:cytoplasm"/>
    <property type="evidence" value="ECO:0007669"/>
    <property type="project" value="UniProtKB-SubCell"/>
</dbReference>
<dbReference type="GO" id="GO:0097367">
    <property type="term" value="F:carbohydrate derivative binding"/>
    <property type="evidence" value="ECO:0007669"/>
    <property type="project" value="InterPro"/>
</dbReference>
<dbReference type="GO" id="GO:0008968">
    <property type="term" value="F:D-sedoheptulose 7-phosphate isomerase activity"/>
    <property type="evidence" value="ECO:0007669"/>
    <property type="project" value="UniProtKB-UniRule"/>
</dbReference>
<dbReference type="GO" id="GO:0008270">
    <property type="term" value="F:zinc ion binding"/>
    <property type="evidence" value="ECO:0007669"/>
    <property type="project" value="UniProtKB-UniRule"/>
</dbReference>
<dbReference type="GO" id="GO:0005975">
    <property type="term" value="P:carbohydrate metabolic process"/>
    <property type="evidence" value="ECO:0007669"/>
    <property type="project" value="UniProtKB-UniRule"/>
</dbReference>
<dbReference type="GO" id="GO:2001061">
    <property type="term" value="P:D-glycero-D-manno-heptose 7-phosphate biosynthetic process"/>
    <property type="evidence" value="ECO:0007669"/>
    <property type="project" value="UniProtKB-UniPathway"/>
</dbReference>
<dbReference type="CDD" id="cd05006">
    <property type="entry name" value="SIS_GmhA"/>
    <property type="match status" value="1"/>
</dbReference>
<dbReference type="Gene3D" id="3.40.50.10490">
    <property type="entry name" value="Glucose-6-phosphate isomerase like protein, domain 1"/>
    <property type="match status" value="1"/>
</dbReference>
<dbReference type="HAMAP" id="MF_00067">
    <property type="entry name" value="GmhA"/>
    <property type="match status" value="1"/>
</dbReference>
<dbReference type="InterPro" id="IPR035461">
    <property type="entry name" value="GmhA/DiaA"/>
</dbReference>
<dbReference type="InterPro" id="IPR004515">
    <property type="entry name" value="Phosphoheptose_Isoase"/>
</dbReference>
<dbReference type="InterPro" id="IPR001347">
    <property type="entry name" value="SIS_dom"/>
</dbReference>
<dbReference type="InterPro" id="IPR046348">
    <property type="entry name" value="SIS_dom_sf"/>
</dbReference>
<dbReference type="InterPro" id="IPR050099">
    <property type="entry name" value="SIS_GmhA/DiaA_subfam"/>
</dbReference>
<dbReference type="NCBIfam" id="TIGR00441">
    <property type="entry name" value="gmhA"/>
    <property type="match status" value="1"/>
</dbReference>
<dbReference type="NCBIfam" id="NF001628">
    <property type="entry name" value="PRK00414.1"/>
    <property type="match status" value="1"/>
</dbReference>
<dbReference type="PANTHER" id="PTHR30390:SF7">
    <property type="entry name" value="PHOSPHOHEPTOSE ISOMERASE"/>
    <property type="match status" value="1"/>
</dbReference>
<dbReference type="PANTHER" id="PTHR30390">
    <property type="entry name" value="SEDOHEPTULOSE 7-PHOSPHATE ISOMERASE / DNAA INITIATOR-ASSOCIATING FACTOR FOR REPLICATION INITIATION"/>
    <property type="match status" value="1"/>
</dbReference>
<dbReference type="Pfam" id="PF13580">
    <property type="entry name" value="SIS_2"/>
    <property type="match status" value="1"/>
</dbReference>
<dbReference type="SUPFAM" id="SSF53697">
    <property type="entry name" value="SIS domain"/>
    <property type="match status" value="1"/>
</dbReference>
<dbReference type="PROSITE" id="PS51464">
    <property type="entry name" value="SIS"/>
    <property type="match status" value="1"/>
</dbReference>
<reference key="1">
    <citation type="journal article" date="2007" name="Appl. Environ. Microbiol.">
        <title>Genome sequence of the cellulolytic gliding bacterium Cytophaga hutchinsonii.</title>
        <authorList>
            <person name="Xie G."/>
            <person name="Bruce D.C."/>
            <person name="Challacombe J.F."/>
            <person name="Chertkov O."/>
            <person name="Detter J.C."/>
            <person name="Gilna P."/>
            <person name="Han C.S."/>
            <person name="Lucas S."/>
            <person name="Misra M."/>
            <person name="Myers G.L."/>
            <person name="Richardson P."/>
            <person name="Tapia R."/>
            <person name="Thayer N."/>
            <person name="Thompson L.S."/>
            <person name="Brettin T.S."/>
            <person name="Henrissat B."/>
            <person name="Wilson D.B."/>
            <person name="McBride M.J."/>
        </authorList>
    </citation>
    <scope>NUCLEOTIDE SEQUENCE [LARGE SCALE GENOMIC DNA]</scope>
    <source>
        <strain>ATCC 33406 / DSM 1761 / JCM 20678 / CIP 103989 / IAM 12607 / NBRC 15051 / NCIMB 9469 / D465</strain>
    </source>
</reference>
<organism>
    <name type="scientific">Cytophaga hutchinsonii (strain ATCC 33406 / DSM 1761 / CIP 103989 / NBRC 15051 / NCIMB 9469 / D465)</name>
    <dbReference type="NCBI Taxonomy" id="269798"/>
    <lineage>
        <taxon>Bacteria</taxon>
        <taxon>Pseudomonadati</taxon>
        <taxon>Bacteroidota</taxon>
        <taxon>Cytophagia</taxon>
        <taxon>Cytophagales</taxon>
        <taxon>Cytophagaceae</taxon>
        <taxon>Cytophaga</taxon>
    </lineage>
</organism>
<gene>
    <name evidence="1" type="primary">gmhA</name>
    <name type="ordered locus">CHU_0355</name>
</gene>
<comment type="function">
    <text evidence="1">Catalyzes the isomerization of sedoheptulose 7-phosphate in D-glycero-D-manno-heptose 7-phosphate.</text>
</comment>
<comment type="catalytic activity">
    <reaction evidence="1">
        <text>2 D-sedoheptulose 7-phosphate = D-glycero-alpha-D-manno-heptose 7-phosphate + D-glycero-beta-D-manno-heptose 7-phosphate</text>
        <dbReference type="Rhea" id="RHEA:27489"/>
        <dbReference type="ChEBI" id="CHEBI:57483"/>
        <dbReference type="ChEBI" id="CHEBI:60203"/>
        <dbReference type="ChEBI" id="CHEBI:60204"/>
        <dbReference type="EC" id="5.3.1.28"/>
    </reaction>
</comment>
<comment type="cofactor">
    <cofactor evidence="1">
        <name>Zn(2+)</name>
        <dbReference type="ChEBI" id="CHEBI:29105"/>
    </cofactor>
    <text evidence="1">Binds 1 zinc ion per subunit.</text>
</comment>
<comment type="pathway">
    <text evidence="1">Carbohydrate biosynthesis; D-glycero-D-manno-heptose 7-phosphate biosynthesis; D-glycero-alpha-D-manno-heptose 7-phosphate and D-glycero-beta-D-manno-heptose 7-phosphate from sedoheptulose 7-phosphate: step 1/1.</text>
</comment>
<comment type="subcellular location">
    <subcellularLocation>
        <location evidence="1">Cytoplasm</location>
    </subcellularLocation>
</comment>
<comment type="miscellaneous">
    <text evidence="1">The reaction produces a racemic mixture of D-glycero-alpha-D-manno-heptose 7-phosphate and D-glycero-beta-D-manno-heptose 7-phosphate.</text>
</comment>
<comment type="similarity">
    <text evidence="1">Belongs to the SIS family. GmhA subfamily.</text>
</comment>